<gene>
    <name type="primary">lacE</name>
    <name type="ORF">AFUB_048070</name>
</gene>
<evidence type="ECO:0000250" key="1"/>
<evidence type="ECO:0000255" key="2"/>
<evidence type="ECO:0000305" key="3"/>
<proteinExistence type="inferred from homology"/>
<sequence length="1011" mass="111734">MKSLLKRLIALAAAYSVAAAPSFSHHSSQDAANKRELLQDLVTWDQHSLFVRGERLMIFSGEFHPFRLPVPGLWFDVFQKIKSLGFNAVSFYTDWGLMEGNPGHVVTDGIWSLDEFFTAAREAGLYLIARPGPYINAETSAGGIPGWVLRRKGIIRSNSEDYLRATDTYMATLGKIIAKAQITNGGPVILVQPENEYTTWPNVSESEFPTTMNQEVMAYAEKQLRDAGVVVPTVVNDNKNLGYFAPGTGLGETDLYGIDAYPMRYDCGNPYVWPTYRFPRDWQHEHRNHSPTTPFAIMEFQGGSGDGWGGVTEDGCAILVNNEAVRVVYKNNYGFGVRVFNIYMTYGGTNWGNLGYYGGYTSYDYGAAITEDRQIWREKYSEEKLQANFLKVSPAYLTSTPGNGVNGSYTGNKDITVTPLFGNGTTTNLYLVRHADFTSTGSAQYNLSISTSVGNVTIPQLGGSLSLNGRDSKFHITDYDVGGFNLIYSSAEVFTWAKGDNKKRVLVLYGGAGELHEFALPKHLPRPTVVEGSYVKIAKQGSAWVVQWEVAAQRRVLRAGKLEIHLLWRNDAYQHWVLELPAKQPIANYSSPSKETVIVKGGYLLRSAWITDNDLHLTGDVNVTTPLEVISAPKRFDGIVFNGQSLKSTRSKIGNLAATVHYQPPAISLPDLKRLDWKYIDSLPEISTEYNDEGWTPLTNTYTNNTREFTGPTCLYADDYGYHGGSLIYRGHFTANGDESWVFLNTSGGVGFANSVWLNQTFLGSWTGSGRNMTYPRNISLPHELSPGEPYVFTVVIDHMGQDEEAPGTDAIKFPRGILDYALSGHELSDLRWKMTGNLGGEQYQDLTRGPLNEGAMYAERQGYHLPSPPTSSWKSSNPIKEGLTGAGIGFYATSFSLDLPEGYDIPLSFRFNNSASAARSGTSYRCQLFVNGYQFGKYVNDLGPQTKFPVPEGILNYNGVNYVAVSLWALESQGALIGGLDLVASTPILSGYRKPAPAPQPGWKPRRGAY</sequence>
<accession>B0XXE7</accession>
<comment type="function">
    <text evidence="1">Cleaves beta-linked terminal galactosyl residues from gangliosides, glycoproteins, and glycosaminoglycans.</text>
</comment>
<comment type="catalytic activity">
    <reaction>
        <text>Hydrolysis of terminal non-reducing beta-D-galactose residues in beta-D-galactosides.</text>
        <dbReference type="EC" id="3.2.1.23"/>
    </reaction>
</comment>
<comment type="subcellular location">
    <subcellularLocation>
        <location evidence="1">Secreted</location>
    </subcellularLocation>
</comment>
<comment type="similarity">
    <text evidence="3">Belongs to the glycosyl hydrolase 35 family.</text>
</comment>
<protein>
    <recommendedName>
        <fullName>Probable beta-galactosidase E</fullName>
        <ecNumber>3.2.1.23</ecNumber>
    </recommendedName>
    <alternativeName>
        <fullName>Lactase E</fullName>
    </alternativeName>
</protein>
<reference key="1">
    <citation type="journal article" date="2008" name="PLoS Genet.">
        <title>Genomic islands in the pathogenic filamentous fungus Aspergillus fumigatus.</title>
        <authorList>
            <person name="Fedorova N.D."/>
            <person name="Khaldi N."/>
            <person name="Joardar V.S."/>
            <person name="Maiti R."/>
            <person name="Amedeo P."/>
            <person name="Anderson M.J."/>
            <person name="Crabtree J."/>
            <person name="Silva J.C."/>
            <person name="Badger J.H."/>
            <person name="Albarraq A."/>
            <person name="Angiuoli S."/>
            <person name="Bussey H."/>
            <person name="Bowyer P."/>
            <person name="Cotty P.J."/>
            <person name="Dyer P.S."/>
            <person name="Egan A."/>
            <person name="Galens K."/>
            <person name="Fraser-Liggett C.M."/>
            <person name="Haas B.J."/>
            <person name="Inman J.M."/>
            <person name="Kent R."/>
            <person name="Lemieux S."/>
            <person name="Malavazi I."/>
            <person name="Orvis J."/>
            <person name="Roemer T."/>
            <person name="Ronning C.M."/>
            <person name="Sundaram J.P."/>
            <person name="Sutton G."/>
            <person name="Turner G."/>
            <person name="Venter J.C."/>
            <person name="White O.R."/>
            <person name="Whitty B.R."/>
            <person name="Youngman P."/>
            <person name="Wolfe K.H."/>
            <person name="Goldman G.H."/>
            <person name="Wortman J.R."/>
            <person name="Jiang B."/>
            <person name="Denning D.W."/>
            <person name="Nierman W.C."/>
        </authorList>
    </citation>
    <scope>NUCLEOTIDE SEQUENCE [LARGE SCALE GENOMIC DNA]</scope>
    <source>
        <strain>CBS 144.89 / FGSC A1163 / CEA10</strain>
    </source>
</reference>
<feature type="signal peptide" evidence="2">
    <location>
        <begin position="1"/>
        <end position="19"/>
    </location>
</feature>
<feature type="chain" id="PRO_0000395242" description="Probable beta-galactosidase E">
    <location>
        <begin position="20"/>
        <end position="1011"/>
    </location>
</feature>
<feature type="active site" description="Proton donor" evidence="2">
    <location>
        <position position="196"/>
    </location>
</feature>
<feature type="active site" description="Nucleophile" evidence="2">
    <location>
        <position position="299"/>
    </location>
</feature>
<feature type="binding site" evidence="1">
    <location>
        <position position="92"/>
    </location>
    <ligand>
        <name>substrate</name>
    </ligand>
</feature>
<feature type="binding site" evidence="1">
    <location>
        <position position="136"/>
    </location>
    <ligand>
        <name>substrate</name>
    </ligand>
</feature>
<feature type="binding site" evidence="1">
    <location>
        <position position="137"/>
    </location>
    <ligand>
        <name>substrate</name>
    </ligand>
</feature>
<feature type="binding site" evidence="1">
    <location>
        <position position="138"/>
    </location>
    <ligand>
        <name>substrate</name>
    </ligand>
</feature>
<feature type="binding site" evidence="1">
    <location>
        <position position="195"/>
    </location>
    <ligand>
        <name>substrate</name>
    </ligand>
</feature>
<feature type="binding site" evidence="1">
    <location>
        <position position="261"/>
    </location>
    <ligand>
        <name>substrate</name>
    </ligand>
</feature>
<feature type="binding site" evidence="1">
    <location>
        <position position="365"/>
    </location>
    <ligand>
        <name>substrate</name>
    </ligand>
</feature>
<feature type="glycosylation site" description="N-linked (GlcNAc...) asparagine" evidence="2">
    <location>
        <position position="202"/>
    </location>
</feature>
<feature type="glycosylation site" description="N-linked (GlcNAc...) asparagine" evidence="2">
    <location>
        <position position="406"/>
    </location>
</feature>
<feature type="glycosylation site" description="N-linked (GlcNAc...) asparagine" evidence="2">
    <location>
        <position position="423"/>
    </location>
</feature>
<feature type="glycosylation site" description="N-linked (GlcNAc...) asparagine" evidence="2">
    <location>
        <position position="446"/>
    </location>
</feature>
<feature type="glycosylation site" description="N-linked (GlcNAc...) asparagine" evidence="2">
    <location>
        <position position="455"/>
    </location>
</feature>
<feature type="glycosylation site" description="N-linked (GlcNAc...) asparagine" evidence="2">
    <location>
        <position position="588"/>
    </location>
</feature>
<feature type="glycosylation site" description="N-linked (GlcNAc...) asparagine" evidence="2">
    <location>
        <position position="622"/>
    </location>
</feature>
<feature type="glycosylation site" description="N-linked (GlcNAc...) asparagine" evidence="2">
    <location>
        <position position="704"/>
    </location>
</feature>
<feature type="glycosylation site" description="N-linked (GlcNAc...) asparagine" evidence="2">
    <location>
        <position position="745"/>
    </location>
</feature>
<feature type="glycosylation site" description="N-linked (GlcNAc...) asparagine" evidence="2">
    <location>
        <position position="759"/>
    </location>
</feature>
<feature type="glycosylation site" description="N-linked (GlcNAc...) asparagine" evidence="2">
    <location>
        <position position="772"/>
    </location>
</feature>
<feature type="glycosylation site" description="N-linked (GlcNAc...) asparagine" evidence="2">
    <location>
        <position position="778"/>
    </location>
</feature>
<feature type="glycosylation site" description="N-linked (GlcNAc...) asparagine" evidence="2">
    <location>
        <position position="913"/>
    </location>
</feature>
<feature type="disulfide bond" evidence="1">
    <location>
        <begin position="267"/>
        <end position="316"/>
    </location>
</feature>
<name>BGALE_ASPFC</name>
<organism>
    <name type="scientific">Aspergillus fumigatus (strain CBS 144.89 / FGSC A1163 / CEA10)</name>
    <name type="common">Neosartorya fumigata</name>
    <dbReference type="NCBI Taxonomy" id="451804"/>
    <lineage>
        <taxon>Eukaryota</taxon>
        <taxon>Fungi</taxon>
        <taxon>Dikarya</taxon>
        <taxon>Ascomycota</taxon>
        <taxon>Pezizomycotina</taxon>
        <taxon>Eurotiomycetes</taxon>
        <taxon>Eurotiomycetidae</taxon>
        <taxon>Eurotiales</taxon>
        <taxon>Aspergillaceae</taxon>
        <taxon>Aspergillus</taxon>
        <taxon>Aspergillus subgen. Fumigati</taxon>
    </lineage>
</organism>
<dbReference type="EC" id="3.2.1.23"/>
<dbReference type="EMBL" id="DS499596">
    <property type="protein sequence ID" value="EDP53621.1"/>
    <property type="molecule type" value="Genomic_DNA"/>
</dbReference>
<dbReference type="SMR" id="B0XXE7"/>
<dbReference type="GlyCosmos" id="B0XXE7">
    <property type="glycosylation" value="13 sites, No reported glycans"/>
</dbReference>
<dbReference type="EnsemblFungi" id="EDP53621">
    <property type="protein sequence ID" value="EDP53621"/>
    <property type="gene ID" value="AFUB_048070"/>
</dbReference>
<dbReference type="VEuPathDB" id="FungiDB:AFUB_048070"/>
<dbReference type="HOGENOM" id="CLU_005732_2_0_1"/>
<dbReference type="OrthoDB" id="127558at5052"/>
<dbReference type="PhylomeDB" id="B0XXE7"/>
<dbReference type="Proteomes" id="UP000001699">
    <property type="component" value="Unassembled WGS sequence"/>
</dbReference>
<dbReference type="GO" id="GO:0005576">
    <property type="term" value="C:extracellular region"/>
    <property type="evidence" value="ECO:0007669"/>
    <property type="project" value="UniProtKB-SubCell"/>
</dbReference>
<dbReference type="GO" id="GO:0004565">
    <property type="term" value="F:beta-galactosidase activity"/>
    <property type="evidence" value="ECO:0007669"/>
    <property type="project" value="UniProtKB-EC"/>
</dbReference>
<dbReference type="GO" id="GO:0000272">
    <property type="term" value="P:polysaccharide catabolic process"/>
    <property type="evidence" value="ECO:0007669"/>
    <property type="project" value="UniProtKB-KW"/>
</dbReference>
<dbReference type="FunFam" id="2.102.20.10:FF:000001">
    <property type="entry name" value="Beta-galactosidase A"/>
    <property type="match status" value="1"/>
</dbReference>
<dbReference type="FunFam" id="2.60.120.260:FF:000065">
    <property type="entry name" value="Beta-galactosidase A"/>
    <property type="match status" value="1"/>
</dbReference>
<dbReference type="FunFam" id="2.60.120.260:FF:000088">
    <property type="entry name" value="Beta-galactosidase A"/>
    <property type="match status" value="1"/>
</dbReference>
<dbReference type="FunFam" id="2.60.390.10:FF:000001">
    <property type="entry name" value="Beta-galactosidase A"/>
    <property type="match status" value="1"/>
</dbReference>
<dbReference type="FunFam" id="3.20.20.80:FF:000040">
    <property type="entry name" value="Beta-galactosidase A"/>
    <property type="match status" value="1"/>
</dbReference>
<dbReference type="Gene3D" id="2.102.20.10">
    <property type="entry name" value="Beta-galactosidase, domain 2"/>
    <property type="match status" value="1"/>
</dbReference>
<dbReference type="Gene3D" id="2.60.390.10">
    <property type="entry name" value="Beta-galactosidase, domain 3"/>
    <property type="match status" value="1"/>
</dbReference>
<dbReference type="Gene3D" id="2.60.120.260">
    <property type="entry name" value="Galactose-binding domain-like"/>
    <property type="match status" value="2"/>
</dbReference>
<dbReference type="Gene3D" id="3.20.20.80">
    <property type="entry name" value="Glycosidases"/>
    <property type="match status" value="1"/>
</dbReference>
<dbReference type="InterPro" id="IPR018954">
    <property type="entry name" value="Betagal_dom2"/>
</dbReference>
<dbReference type="InterPro" id="IPR037110">
    <property type="entry name" value="Betagal_dom2_sf"/>
</dbReference>
<dbReference type="InterPro" id="IPR025972">
    <property type="entry name" value="BetaGal_dom3"/>
</dbReference>
<dbReference type="InterPro" id="IPR036833">
    <property type="entry name" value="BetaGal_dom3_sf"/>
</dbReference>
<dbReference type="InterPro" id="IPR025300">
    <property type="entry name" value="BetaGal_jelly_roll_dom"/>
</dbReference>
<dbReference type="InterPro" id="IPR008979">
    <property type="entry name" value="Galactose-bd-like_sf"/>
</dbReference>
<dbReference type="InterPro" id="IPR031330">
    <property type="entry name" value="Gly_Hdrlase_35_cat"/>
</dbReference>
<dbReference type="InterPro" id="IPR019801">
    <property type="entry name" value="Glyco_hydro_35_CS"/>
</dbReference>
<dbReference type="InterPro" id="IPR001944">
    <property type="entry name" value="Glycoside_Hdrlase_35"/>
</dbReference>
<dbReference type="InterPro" id="IPR017853">
    <property type="entry name" value="Glycoside_hydrolase_SF"/>
</dbReference>
<dbReference type="PANTHER" id="PTHR23421">
    <property type="entry name" value="BETA-GALACTOSIDASE RELATED"/>
    <property type="match status" value="1"/>
</dbReference>
<dbReference type="Pfam" id="PF13364">
    <property type="entry name" value="BetaGal_ABD2"/>
    <property type="match status" value="2"/>
</dbReference>
<dbReference type="Pfam" id="PF10435">
    <property type="entry name" value="BetaGal_dom2"/>
    <property type="match status" value="1"/>
</dbReference>
<dbReference type="Pfam" id="PF13363">
    <property type="entry name" value="BetaGal_dom3"/>
    <property type="match status" value="1"/>
</dbReference>
<dbReference type="Pfam" id="PF01301">
    <property type="entry name" value="Glyco_hydro_35"/>
    <property type="match status" value="1"/>
</dbReference>
<dbReference type="PRINTS" id="PR00742">
    <property type="entry name" value="GLHYDRLASE35"/>
</dbReference>
<dbReference type="SMART" id="SM01029">
    <property type="entry name" value="BetaGal_dom2"/>
    <property type="match status" value="1"/>
</dbReference>
<dbReference type="SUPFAM" id="SSF51445">
    <property type="entry name" value="(Trans)glycosidases"/>
    <property type="match status" value="1"/>
</dbReference>
<dbReference type="SUPFAM" id="SSF117100">
    <property type="entry name" value="Beta-galactosidase LacA, domain 3"/>
    <property type="match status" value="1"/>
</dbReference>
<dbReference type="SUPFAM" id="SSF49785">
    <property type="entry name" value="Galactose-binding domain-like"/>
    <property type="match status" value="2"/>
</dbReference>
<dbReference type="SUPFAM" id="SSF51011">
    <property type="entry name" value="Glycosyl hydrolase domain"/>
    <property type="match status" value="1"/>
</dbReference>
<dbReference type="PROSITE" id="PS01182">
    <property type="entry name" value="GLYCOSYL_HYDROL_F35"/>
    <property type="match status" value="1"/>
</dbReference>
<keyword id="KW-0119">Carbohydrate metabolism</keyword>
<keyword id="KW-1015">Disulfide bond</keyword>
<keyword id="KW-0325">Glycoprotein</keyword>
<keyword id="KW-0326">Glycosidase</keyword>
<keyword id="KW-0378">Hydrolase</keyword>
<keyword id="KW-0624">Polysaccharide degradation</keyword>
<keyword id="KW-0964">Secreted</keyword>
<keyword id="KW-0732">Signal</keyword>